<dbReference type="EMBL" id="CU928158">
    <property type="protein sequence ID" value="CAQ87750.1"/>
    <property type="molecule type" value="Genomic_DNA"/>
</dbReference>
<dbReference type="RefSeq" id="WP_001159440.1">
    <property type="nucleotide sequence ID" value="NC_011740.1"/>
</dbReference>
<dbReference type="SMR" id="B7LW53"/>
<dbReference type="GeneID" id="75058747"/>
<dbReference type="KEGG" id="efe:EFER_0169"/>
<dbReference type="HOGENOM" id="CLU_052299_2_0_6"/>
<dbReference type="OrthoDB" id="9802365at2"/>
<dbReference type="Proteomes" id="UP000000745">
    <property type="component" value="Chromosome"/>
</dbReference>
<dbReference type="GO" id="GO:0003677">
    <property type="term" value="F:DNA binding"/>
    <property type="evidence" value="ECO:0007669"/>
    <property type="project" value="UniProtKB-KW"/>
</dbReference>
<dbReference type="CDD" id="cd22359">
    <property type="entry name" value="SfsA-like_bacterial"/>
    <property type="match status" value="1"/>
</dbReference>
<dbReference type="FunFam" id="2.40.50.580:FF:000001">
    <property type="entry name" value="Sugar fermentation stimulation protein A"/>
    <property type="match status" value="1"/>
</dbReference>
<dbReference type="FunFam" id="3.40.1350.60:FF:000001">
    <property type="entry name" value="Sugar fermentation stimulation protein A"/>
    <property type="match status" value="1"/>
</dbReference>
<dbReference type="Gene3D" id="2.40.50.580">
    <property type="match status" value="1"/>
</dbReference>
<dbReference type="Gene3D" id="3.40.1350.60">
    <property type="match status" value="1"/>
</dbReference>
<dbReference type="HAMAP" id="MF_00095">
    <property type="entry name" value="SfsA"/>
    <property type="match status" value="1"/>
</dbReference>
<dbReference type="InterPro" id="IPR005224">
    <property type="entry name" value="SfsA"/>
</dbReference>
<dbReference type="InterPro" id="IPR040452">
    <property type="entry name" value="SfsA_C"/>
</dbReference>
<dbReference type="InterPro" id="IPR041465">
    <property type="entry name" value="SfsA_N"/>
</dbReference>
<dbReference type="NCBIfam" id="TIGR00230">
    <property type="entry name" value="sfsA"/>
    <property type="match status" value="1"/>
</dbReference>
<dbReference type="PANTHER" id="PTHR30545">
    <property type="entry name" value="SUGAR FERMENTATION STIMULATION PROTEIN A"/>
    <property type="match status" value="1"/>
</dbReference>
<dbReference type="PANTHER" id="PTHR30545:SF2">
    <property type="entry name" value="SUGAR FERMENTATION STIMULATION PROTEIN A"/>
    <property type="match status" value="1"/>
</dbReference>
<dbReference type="Pfam" id="PF03749">
    <property type="entry name" value="SfsA"/>
    <property type="match status" value="1"/>
</dbReference>
<dbReference type="Pfam" id="PF17746">
    <property type="entry name" value="SfsA_N"/>
    <property type="match status" value="1"/>
</dbReference>
<feature type="chain" id="PRO_1000117272" description="Sugar fermentation stimulation protein A">
    <location>
        <begin position="1"/>
        <end position="234"/>
    </location>
</feature>
<feature type="DNA-binding region" description="H-T-H motif" evidence="1">
    <location>
        <begin position="201"/>
        <end position="220"/>
    </location>
</feature>
<accession>B7LW53</accession>
<organism>
    <name type="scientific">Escherichia fergusonii (strain ATCC 35469 / DSM 13698 / CCUG 18766 / IAM 14443 / JCM 21226 / LMG 7866 / NBRC 102419 / NCTC 12128 / CDC 0568-73)</name>
    <dbReference type="NCBI Taxonomy" id="585054"/>
    <lineage>
        <taxon>Bacteria</taxon>
        <taxon>Pseudomonadati</taxon>
        <taxon>Pseudomonadota</taxon>
        <taxon>Gammaproteobacteria</taxon>
        <taxon>Enterobacterales</taxon>
        <taxon>Enterobacteriaceae</taxon>
        <taxon>Escherichia</taxon>
    </lineage>
</organism>
<name>SFSA_ESCF3</name>
<comment type="function">
    <text evidence="1">Binds to DNA non-specifically. Could be a regulatory factor involved in maltose metabolism.</text>
</comment>
<comment type="similarity">
    <text evidence="1">Belongs to the SfsA family.</text>
</comment>
<gene>
    <name evidence="1" type="primary">sfsA</name>
    <name type="ordered locus">EFER_0169</name>
</gene>
<sequence length="234" mass="26400">MQFFPPLQRATLIQRYKRFLADVITPDGRELTLHCPNTGAMTGCATPGDTVWYSTSENTKRKYPHTWELTETQAGALICVNTLWANRLTKEALENDWLSELSGYSELRSEVKYGAERSRIDFMLQAGFQPDCYIEVKSVTLADHGQGYFPDAITQRGQKHLRELMSVAAEGQRAVILFAVLHSAITRFSPARHIDMKYAQLLTEAQQRGVEILAYKAEISAEGMSLKKLLPITL</sequence>
<keyword id="KW-0238">DNA-binding</keyword>
<protein>
    <recommendedName>
        <fullName evidence="1">Sugar fermentation stimulation protein A</fullName>
    </recommendedName>
</protein>
<evidence type="ECO:0000255" key="1">
    <source>
        <dbReference type="HAMAP-Rule" id="MF_00095"/>
    </source>
</evidence>
<proteinExistence type="inferred from homology"/>
<reference key="1">
    <citation type="journal article" date="2009" name="PLoS Genet.">
        <title>Organised genome dynamics in the Escherichia coli species results in highly diverse adaptive paths.</title>
        <authorList>
            <person name="Touchon M."/>
            <person name="Hoede C."/>
            <person name="Tenaillon O."/>
            <person name="Barbe V."/>
            <person name="Baeriswyl S."/>
            <person name="Bidet P."/>
            <person name="Bingen E."/>
            <person name="Bonacorsi S."/>
            <person name="Bouchier C."/>
            <person name="Bouvet O."/>
            <person name="Calteau A."/>
            <person name="Chiapello H."/>
            <person name="Clermont O."/>
            <person name="Cruveiller S."/>
            <person name="Danchin A."/>
            <person name="Diard M."/>
            <person name="Dossat C."/>
            <person name="Karoui M.E."/>
            <person name="Frapy E."/>
            <person name="Garry L."/>
            <person name="Ghigo J.M."/>
            <person name="Gilles A.M."/>
            <person name="Johnson J."/>
            <person name="Le Bouguenec C."/>
            <person name="Lescat M."/>
            <person name="Mangenot S."/>
            <person name="Martinez-Jehanne V."/>
            <person name="Matic I."/>
            <person name="Nassif X."/>
            <person name="Oztas S."/>
            <person name="Petit M.A."/>
            <person name="Pichon C."/>
            <person name="Rouy Z."/>
            <person name="Ruf C.S."/>
            <person name="Schneider D."/>
            <person name="Tourret J."/>
            <person name="Vacherie B."/>
            <person name="Vallenet D."/>
            <person name="Medigue C."/>
            <person name="Rocha E.P.C."/>
            <person name="Denamur E."/>
        </authorList>
    </citation>
    <scope>NUCLEOTIDE SEQUENCE [LARGE SCALE GENOMIC DNA]</scope>
    <source>
        <strain>ATCC 35469 / DSM 13698 / BCRC 15582 / CCUG 18766 / IAM 14443 / JCM 21226 / LMG 7866 / NBRC 102419 / NCTC 12128 / CDC 0568-73</strain>
    </source>
</reference>